<evidence type="ECO:0000250" key="1">
    <source>
        <dbReference type="UniProtKB" id="Q9S7U9"/>
    </source>
</evidence>
<evidence type="ECO:0000255" key="2">
    <source>
        <dbReference type="PROSITE-ProRule" id="PRU00159"/>
    </source>
</evidence>
<evidence type="ECO:0000269" key="3">
    <source>
    </source>
</evidence>
<evidence type="ECO:0000303" key="4">
    <source>
    </source>
</evidence>
<evidence type="ECO:0000305" key="5"/>
<evidence type="ECO:0000312" key="6">
    <source>
        <dbReference type="EMBL" id="EDQ73493.1"/>
    </source>
</evidence>
<keyword id="KW-0067">ATP-binding</keyword>
<keyword id="KW-0418">Kinase</keyword>
<keyword id="KW-0547">Nucleotide-binding</keyword>
<keyword id="KW-0611">Plant defense</keyword>
<keyword id="KW-1185">Reference proteome</keyword>
<keyword id="KW-0723">Serine/threonine-protein kinase</keyword>
<keyword id="KW-0808">Transferase</keyword>
<protein>
    <recommendedName>
        <fullName evidence="4">Mitogen-activated protein kinase kinase 1c</fullName>
        <ecNumber evidence="1">2.7.12.2</ecNumber>
    </recommendedName>
    <alternativeName>
        <fullName evidence="4">MAP kinase kinase 1c</fullName>
    </alternativeName>
    <alternativeName>
        <fullName evidence="4">PpMKK1c</fullName>
    </alternativeName>
</protein>
<sequence length="346" mass="39138">MSRRVRRGGLRVAVPKQETPVSKFLTASGTFQDDDIKLNHTGLRVVSSEPNLPTQTQSSSPDGQLSIADLELVRFLGKGAGGTVQLVRHKWTNVNYALKAIQMNINETVRKQIVQELKINQVTHQQCPYIVECFHSFYHNGVISMILEYMDRGSLSDIIKQQKQIPEPYLAVIASQVLKGLEYLHQVRHIIHRDIKPSNLLINHKGEVKISDFGVSAVLVHSLAQRDTFVGTCTYMSPERLQGRSYAYDSDLWSLGLTLLECALGTFPYKPAGMEEGWQNFFILMECIVNQPPAAASPDKFSPEFCSFIESCIRKCPSERPSTTDLLKHPFLQKYNEEEYHLSKIL</sequence>
<proteinExistence type="inferred from homology"/>
<organism>
    <name type="scientific">Physcomitrium patens</name>
    <name type="common">Spreading-leaved earth moss</name>
    <name type="synonym">Physcomitrella patens</name>
    <dbReference type="NCBI Taxonomy" id="3218"/>
    <lineage>
        <taxon>Eukaryota</taxon>
        <taxon>Viridiplantae</taxon>
        <taxon>Streptophyta</taxon>
        <taxon>Embryophyta</taxon>
        <taxon>Bryophyta</taxon>
        <taxon>Bryophytina</taxon>
        <taxon>Bryopsida</taxon>
        <taxon>Funariidae</taxon>
        <taxon>Funariales</taxon>
        <taxon>Funariaceae</taxon>
        <taxon>Physcomitrium</taxon>
    </lineage>
</organism>
<reference key="1">
    <citation type="journal article" date="2016" name="Plant Cell">
        <title>An innate immunity pathway in the Moss Physcomitrella patens.</title>
        <authorList>
            <person name="Bressendorff S."/>
            <person name="Azevedo R."/>
            <person name="Kenchappa C.S."/>
            <person name="Ponce de Leon I."/>
            <person name="Olsen J.V."/>
            <person name="Rasmussen M.W."/>
            <person name="Erbs G."/>
            <person name="Newman M.A."/>
            <person name="Petersen M."/>
            <person name="Mundy J."/>
        </authorList>
    </citation>
    <scope>NUCLEOTIDE SEQUENCE [GENOMIC DNA]</scope>
    <scope>FUNCTION</scope>
    <scope>DISRUPTION PHENOTYPE</scope>
    <source>
        <strain evidence="4">cv. Gransden 2004</strain>
    </source>
</reference>
<reference evidence="6" key="2">
    <citation type="journal article" date="2008" name="Science">
        <title>The Physcomitrella genome reveals evolutionary insights into the conquest of land by plants.</title>
        <authorList>
            <person name="Rensing S.A."/>
            <person name="Lang D."/>
            <person name="Zimmer A.D."/>
            <person name="Terry A."/>
            <person name="Salamov A."/>
            <person name="Shapiro H."/>
            <person name="Nishiyama T."/>
            <person name="Perroud P.-F."/>
            <person name="Lindquist E.A."/>
            <person name="Kamisugi Y."/>
            <person name="Tanahashi T."/>
            <person name="Sakakibara K."/>
            <person name="Fujita T."/>
            <person name="Oishi K."/>
            <person name="Shin-I T."/>
            <person name="Kuroki Y."/>
            <person name="Toyoda A."/>
            <person name="Suzuki Y."/>
            <person name="Hashimoto S.-I."/>
            <person name="Yamaguchi K."/>
            <person name="Sugano S."/>
            <person name="Kohara Y."/>
            <person name="Fujiyama A."/>
            <person name="Anterola A."/>
            <person name="Aoki S."/>
            <person name="Ashton N."/>
            <person name="Barbazuk W.B."/>
            <person name="Barker E."/>
            <person name="Bennetzen J.L."/>
            <person name="Blankenship R."/>
            <person name="Cho S.H."/>
            <person name="Dutcher S.K."/>
            <person name="Estelle M."/>
            <person name="Fawcett J.A."/>
            <person name="Gundlach H."/>
            <person name="Hanada K."/>
            <person name="Heyl A."/>
            <person name="Hicks K.A."/>
            <person name="Hughes J."/>
            <person name="Lohr M."/>
            <person name="Mayer K."/>
            <person name="Melkozernov A."/>
            <person name="Murata T."/>
            <person name="Nelson D.R."/>
            <person name="Pils B."/>
            <person name="Prigge M."/>
            <person name="Reiss B."/>
            <person name="Renner T."/>
            <person name="Rombauts S."/>
            <person name="Rushton P.J."/>
            <person name="Sanderfoot A."/>
            <person name="Schween G."/>
            <person name="Shiu S.-H."/>
            <person name="Stueber K."/>
            <person name="Theodoulou F.L."/>
            <person name="Tu H."/>
            <person name="Van de Peer Y."/>
            <person name="Verrier P.J."/>
            <person name="Waters E."/>
            <person name="Wood A."/>
            <person name="Yang L."/>
            <person name="Cove D."/>
            <person name="Cuming A.C."/>
            <person name="Hasebe M."/>
            <person name="Lucas S."/>
            <person name="Mishler B.D."/>
            <person name="Reski R."/>
            <person name="Grigoriev I.V."/>
            <person name="Quatrano R.S."/>
            <person name="Boore J.L."/>
        </authorList>
    </citation>
    <scope>NUCLEOTIDE SEQUENCE [LARGE SCALE GENOMIC DNA]</scope>
    <source>
        <strain>cv. Gransden 2004</strain>
    </source>
</reference>
<accession>A9S5R3</accession>
<name>M2K1C_PHYPA</name>
<feature type="chain" id="PRO_0000443375" description="Mitogen-activated protein kinase kinase 1c">
    <location>
        <begin position="1"/>
        <end position="346"/>
    </location>
</feature>
<feature type="domain" description="Protein kinase" evidence="2">
    <location>
        <begin position="70"/>
        <end position="332"/>
    </location>
</feature>
<feature type="active site" description="Proton acceptor" evidence="2">
    <location>
        <position position="194"/>
    </location>
</feature>
<feature type="binding site" evidence="2">
    <location>
        <begin position="76"/>
        <end position="84"/>
    </location>
    <ligand>
        <name>ATP</name>
        <dbReference type="ChEBI" id="CHEBI:30616"/>
    </ligand>
</feature>
<feature type="binding site" evidence="2">
    <location>
        <position position="99"/>
    </location>
    <ligand>
        <name>ATP</name>
        <dbReference type="ChEBI" id="CHEBI:30616"/>
    </ligand>
</feature>
<comment type="function">
    <text evidence="3">The CERK1, MEKK1a/b, MKK1a/b/c and MPK4a/b proteins are involved in pathogen defense. The pathway induces rapid growth inhibition, cell wall depositions and accumulation of defense-related transcripts. This protein is required for full defense response to fungal pathogen chitin.</text>
</comment>
<comment type="catalytic activity">
    <reaction evidence="1">
        <text>L-seryl-[protein] + ATP = O-phospho-L-seryl-[protein] + ADP + H(+)</text>
        <dbReference type="Rhea" id="RHEA:17989"/>
        <dbReference type="Rhea" id="RHEA-COMP:9863"/>
        <dbReference type="Rhea" id="RHEA-COMP:11604"/>
        <dbReference type="ChEBI" id="CHEBI:15378"/>
        <dbReference type="ChEBI" id="CHEBI:29999"/>
        <dbReference type="ChEBI" id="CHEBI:30616"/>
        <dbReference type="ChEBI" id="CHEBI:83421"/>
        <dbReference type="ChEBI" id="CHEBI:456216"/>
        <dbReference type="EC" id="2.7.12.2"/>
    </reaction>
</comment>
<comment type="catalytic activity">
    <reaction evidence="1">
        <text>L-threonyl-[protein] + ATP = O-phospho-L-threonyl-[protein] + ADP + H(+)</text>
        <dbReference type="Rhea" id="RHEA:46608"/>
        <dbReference type="Rhea" id="RHEA-COMP:11060"/>
        <dbReference type="Rhea" id="RHEA-COMP:11605"/>
        <dbReference type="ChEBI" id="CHEBI:15378"/>
        <dbReference type="ChEBI" id="CHEBI:30013"/>
        <dbReference type="ChEBI" id="CHEBI:30616"/>
        <dbReference type="ChEBI" id="CHEBI:61977"/>
        <dbReference type="ChEBI" id="CHEBI:456216"/>
        <dbReference type="EC" id="2.7.12.2"/>
    </reaction>
</comment>
<comment type="catalytic activity">
    <reaction evidence="1">
        <text>L-tyrosyl-[protein] + ATP = O-phospho-L-tyrosyl-[protein] + ADP + H(+)</text>
        <dbReference type="Rhea" id="RHEA:10596"/>
        <dbReference type="Rhea" id="RHEA-COMP:10136"/>
        <dbReference type="Rhea" id="RHEA-COMP:20101"/>
        <dbReference type="ChEBI" id="CHEBI:15378"/>
        <dbReference type="ChEBI" id="CHEBI:30616"/>
        <dbReference type="ChEBI" id="CHEBI:46858"/>
        <dbReference type="ChEBI" id="CHEBI:61978"/>
        <dbReference type="ChEBI" id="CHEBI:456216"/>
        <dbReference type="EC" id="2.7.12.2"/>
    </reaction>
</comment>
<comment type="disruption phenotype">
    <text evidence="3">Slighty reduced chitin-induced cell wall modification compared to wild-type. Significantly reduced chitin-induced MPK phosphorylation. The levels of mRNAs of the defense-related PAL4 and CHS are being less induced following chitin treatment.</text>
</comment>
<comment type="similarity">
    <text evidence="5">Belongs to the protein kinase superfamily. STE Ser/Thr protein kinase family. MAP kinase kinase subfamily.</text>
</comment>
<gene>
    <name evidence="4" type="primary">MKK1c</name>
    <name evidence="6" type="ORF">PHYPADRAFT_181532</name>
</gene>
<dbReference type="EC" id="2.7.12.2" evidence="1"/>
<dbReference type="EMBL" id="DS544939">
    <property type="protein sequence ID" value="EDQ73493.1"/>
    <property type="molecule type" value="Genomic_DNA"/>
</dbReference>
<dbReference type="RefSeq" id="XP_001761737.1">
    <property type="nucleotide sequence ID" value="XM_001761685.1"/>
</dbReference>
<dbReference type="SMR" id="A9S5R3"/>
<dbReference type="FunCoup" id="A9S5R3">
    <property type="interactions" value="3539"/>
</dbReference>
<dbReference type="PaxDb" id="3218-PP1S50_83V6.1"/>
<dbReference type="EnsemblPlants" id="Pp3c25_9020V3.1">
    <property type="protein sequence ID" value="Pp3c25_9020V3.1"/>
    <property type="gene ID" value="Pp3c25_9020"/>
</dbReference>
<dbReference type="EnsemblPlants" id="Pp3c25_9020V3.2">
    <property type="protein sequence ID" value="Pp3c25_9020V3.2"/>
    <property type="gene ID" value="Pp3c25_9020"/>
</dbReference>
<dbReference type="EnsemblPlants" id="Pp3c25_9020V3.3">
    <property type="protein sequence ID" value="Pp3c25_9020V3.3"/>
    <property type="gene ID" value="Pp3c25_9020"/>
</dbReference>
<dbReference type="Gramene" id="Pp3c25_9020V3.1">
    <property type="protein sequence ID" value="Pp3c25_9020V3.1"/>
    <property type="gene ID" value="Pp3c25_9020"/>
</dbReference>
<dbReference type="Gramene" id="Pp3c25_9020V3.2">
    <property type="protein sequence ID" value="Pp3c25_9020V3.2"/>
    <property type="gene ID" value="Pp3c25_9020"/>
</dbReference>
<dbReference type="Gramene" id="Pp3c25_9020V3.3">
    <property type="protein sequence ID" value="Pp3c25_9020V3.3"/>
    <property type="gene ID" value="Pp3c25_9020"/>
</dbReference>
<dbReference type="eggNOG" id="KOG0581">
    <property type="taxonomic scope" value="Eukaryota"/>
</dbReference>
<dbReference type="InParanoid" id="A9S5R3"/>
<dbReference type="OMA" id="DEYPRIC"/>
<dbReference type="OrthoDB" id="10252354at2759"/>
<dbReference type="Proteomes" id="UP000006727">
    <property type="component" value="Chromosome 25"/>
</dbReference>
<dbReference type="GO" id="GO:0005737">
    <property type="term" value="C:cytoplasm"/>
    <property type="evidence" value="ECO:0000318"/>
    <property type="project" value="GO_Central"/>
</dbReference>
<dbReference type="GO" id="GO:0005524">
    <property type="term" value="F:ATP binding"/>
    <property type="evidence" value="ECO:0007669"/>
    <property type="project" value="UniProtKB-KW"/>
</dbReference>
<dbReference type="GO" id="GO:0004708">
    <property type="term" value="F:MAP kinase kinase activity"/>
    <property type="evidence" value="ECO:0007669"/>
    <property type="project" value="UniProtKB-EC"/>
</dbReference>
<dbReference type="GO" id="GO:0106310">
    <property type="term" value="F:protein serine kinase activity"/>
    <property type="evidence" value="ECO:0007669"/>
    <property type="project" value="RHEA"/>
</dbReference>
<dbReference type="GO" id="GO:0004674">
    <property type="term" value="F:protein serine/threonine kinase activity"/>
    <property type="evidence" value="ECO:0000318"/>
    <property type="project" value="GO_Central"/>
</dbReference>
<dbReference type="GO" id="GO:0004713">
    <property type="term" value="F:protein tyrosine kinase activity"/>
    <property type="evidence" value="ECO:0007669"/>
    <property type="project" value="RHEA"/>
</dbReference>
<dbReference type="GO" id="GO:0006952">
    <property type="term" value="P:defense response"/>
    <property type="evidence" value="ECO:0007669"/>
    <property type="project" value="UniProtKB-KW"/>
</dbReference>
<dbReference type="GO" id="GO:0010200">
    <property type="term" value="P:response to chitin"/>
    <property type="evidence" value="ECO:0000315"/>
    <property type="project" value="UniProtKB"/>
</dbReference>
<dbReference type="CDD" id="cd06623">
    <property type="entry name" value="PKc_MAPKK_plant_like"/>
    <property type="match status" value="1"/>
</dbReference>
<dbReference type="FunFam" id="1.10.510.10:FF:000432">
    <property type="entry name" value="mitogen-activated protein kinase kinase 3"/>
    <property type="match status" value="1"/>
</dbReference>
<dbReference type="FunFam" id="3.30.200.20:FF:000265">
    <property type="entry name" value="Mitogen-activated protein kinase kinase 6"/>
    <property type="match status" value="1"/>
</dbReference>
<dbReference type="Gene3D" id="3.30.200.20">
    <property type="entry name" value="Phosphorylase Kinase, domain 1"/>
    <property type="match status" value="1"/>
</dbReference>
<dbReference type="Gene3D" id="1.10.510.10">
    <property type="entry name" value="Transferase(Phosphotransferase) domain 1"/>
    <property type="match status" value="1"/>
</dbReference>
<dbReference type="InterPro" id="IPR011009">
    <property type="entry name" value="Kinase-like_dom_sf"/>
</dbReference>
<dbReference type="InterPro" id="IPR000719">
    <property type="entry name" value="Prot_kinase_dom"/>
</dbReference>
<dbReference type="InterPro" id="IPR017441">
    <property type="entry name" value="Protein_kinase_ATP_BS"/>
</dbReference>
<dbReference type="InterPro" id="IPR008271">
    <property type="entry name" value="Ser/Thr_kinase_AS"/>
</dbReference>
<dbReference type="PANTHER" id="PTHR48013">
    <property type="entry name" value="DUAL SPECIFICITY MITOGEN-ACTIVATED PROTEIN KINASE KINASE 5-RELATED"/>
    <property type="match status" value="1"/>
</dbReference>
<dbReference type="PANTHER" id="PTHR48013:SF32">
    <property type="entry name" value="MITOGEN-ACTIVATED PROTEIN KINASE KINASE 2-LIKE"/>
    <property type="match status" value="1"/>
</dbReference>
<dbReference type="Pfam" id="PF00069">
    <property type="entry name" value="Pkinase"/>
    <property type="match status" value="1"/>
</dbReference>
<dbReference type="PIRSF" id="PIRSF000654">
    <property type="entry name" value="Integrin-linked_kinase"/>
    <property type="match status" value="1"/>
</dbReference>
<dbReference type="SMART" id="SM00220">
    <property type="entry name" value="S_TKc"/>
    <property type="match status" value="1"/>
</dbReference>
<dbReference type="SUPFAM" id="SSF56112">
    <property type="entry name" value="Protein kinase-like (PK-like)"/>
    <property type="match status" value="1"/>
</dbReference>
<dbReference type="PROSITE" id="PS00107">
    <property type="entry name" value="PROTEIN_KINASE_ATP"/>
    <property type="match status" value="1"/>
</dbReference>
<dbReference type="PROSITE" id="PS50011">
    <property type="entry name" value="PROTEIN_KINASE_DOM"/>
    <property type="match status" value="1"/>
</dbReference>
<dbReference type="PROSITE" id="PS00108">
    <property type="entry name" value="PROTEIN_KINASE_ST"/>
    <property type="match status" value="1"/>
</dbReference>